<organism>
    <name type="scientific">Mycobacterium tuberculosis (strain CDC 1551 / Oshkosh)</name>
    <dbReference type="NCBI Taxonomy" id="83331"/>
    <lineage>
        <taxon>Bacteria</taxon>
        <taxon>Bacillati</taxon>
        <taxon>Actinomycetota</taxon>
        <taxon>Actinomycetes</taxon>
        <taxon>Mycobacteriales</taxon>
        <taxon>Mycobacteriaceae</taxon>
        <taxon>Mycobacterium</taxon>
        <taxon>Mycobacterium tuberculosis complex</taxon>
    </lineage>
</organism>
<comment type="function">
    <text evidence="1">Catalyzes the NADPH-dependent reduction of L-glutamate 5-phosphate into L-glutamate 5-semialdehyde and phosphate. The product spontaneously undergoes cyclization to form 1-pyrroline-5-carboxylate.</text>
</comment>
<comment type="catalytic activity">
    <reaction evidence="1">
        <text>L-glutamate 5-semialdehyde + phosphate + NADP(+) = L-glutamyl 5-phosphate + NADPH + H(+)</text>
        <dbReference type="Rhea" id="RHEA:19541"/>
        <dbReference type="ChEBI" id="CHEBI:15378"/>
        <dbReference type="ChEBI" id="CHEBI:43474"/>
        <dbReference type="ChEBI" id="CHEBI:57783"/>
        <dbReference type="ChEBI" id="CHEBI:58066"/>
        <dbReference type="ChEBI" id="CHEBI:58274"/>
        <dbReference type="ChEBI" id="CHEBI:58349"/>
        <dbReference type="EC" id="1.2.1.41"/>
    </reaction>
</comment>
<comment type="pathway">
    <text evidence="1">Amino-acid biosynthesis; L-proline biosynthesis; L-glutamate 5-semialdehyde from L-glutamate: step 2/2.</text>
</comment>
<comment type="subcellular location">
    <subcellularLocation>
        <location evidence="1">Cytoplasm</location>
    </subcellularLocation>
</comment>
<comment type="similarity">
    <text evidence="1">Belongs to the gamma-glutamyl phosphate reductase family.</text>
</comment>
<proteinExistence type="inferred from homology"/>
<evidence type="ECO:0000255" key="1">
    <source>
        <dbReference type="HAMAP-Rule" id="MF_00412"/>
    </source>
</evidence>
<accession>P9WHV0</accession>
<accession>L0TB68</accession>
<accession>P65788</accession>
<accession>P71921</accession>
<gene>
    <name evidence="1" type="primary">proA</name>
    <name type="ordered locus">MT2500</name>
</gene>
<name>PROA_MYCTO</name>
<feature type="chain" id="PRO_0000428118" description="Gamma-glutamyl phosphate reductase">
    <location>
        <begin position="1"/>
        <end position="415"/>
    </location>
</feature>
<keyword id="KW-0028">Amino-acid biosynthesis</keyword>
<keyword id="KW-0963">Cytoplasm</keyword>
<keyword id="KW-0521">NADP</keyword>
<keyword id="KW-0560">Oxidoreductase</keyword>
<keyword id="KW-0641">Proline biosynthesis</keyword>
<keyword id="KW-1185">Reference proteome</keyword>
<sequence>MTVPAPSQLDLRQEVHDAARRARVAARRLASLPTTVKDRALHAAADELLAHRDQILAANAEDLNAAREADTPAAMLDRLSLNPQRVDGIAAGLRQVAGLRDPVGEVLRGYTLPNGLQLRQQRVPLGVVGMIYEGRPNVTVDAFGLTLKSGNAALLRGSSSAAKSNEALVAVLRTALVGLELPADAVQLLSAADRATVTHLIQARGLVDVVIPRGGAGLIEAVVRDAQVPTIETGVGNCHVYVHQAADLDVAERILLNSKTRRPSVCNAAETLLVDAAIAETALPRLLAALQHAGVTVHLDPDEADLRREYLSLDIAVAVVDGVDAAIAHINEYGTGHTEAIVTTNLDAAQRFTEQIDAAAVMVNASTAFTDGEQFGFGAEIGISTQKLHARGPMGLPELTSTKWIAWGAGHTRPA</sequence>
<protein>
    <recommendedName>
        <fullName evidence="1">Gamma-glutamyl phosphate reductase</fullName>
        <shortName evidence="1">GPR</shortName>
        <ecNumber evidence="1">1.2.1.41</ecNumber>
    </recommendedName>
    <alternativeName>
        <fullName evidence="1">Glutamate-5-semialdehyde dehydrogenase</fullName>
    </alternativeName>
    <alternativeName>
        <fullName evidence="1">Glutamyl-gamma-semialdehyde dehydrogenase</fullName>
        <shortName evidence="1">GSA dehydrogenase</shortName>
    </alternativeName>
</protein>
<dbReference type="EC" id="1.2.1.41" evidence="1"/>
<dbReference type="EMBL" id="AE000516">
    <property type="protein sequence ID" value="AAK46797.1"/>
    <property type="molecule type" value="Genomic_DNA"/>
</dbReference>
<dbReference type="PIR" id="A70679">
    <property type="entry name" value="A70679"/>
</dbReference>
<dbReference type="RefSeq" id="WP_003412516.1">
    <property type="nucleotide sequence ID" value="NZ_KK341227.1"/>
</dbReference>
<dbReference type="SMR" id="P9WHV0"/>
<dbReference type="KEGG" id="mtc:MT2500"/>
<dbReference type="PATRIC" id="fig|83331.31.peg.2695"/>
<dbReference type="HOGENOM" id="CLU_030231_0_0_11"/>
<dbReference type="UniPathway" id="UPA00098">
    <property type="reaction ID" value="UER00360"/>
</dbReference>
<dbReference type="Proteomes" id="UP000001020">
    <property type="component" value="Chromosome"/>
</dbReference>
<dbReference type="GO" id="GO:0005737">
    <property type="term" value="C:cytoplasm"/>
    <property type="evidence" value="ECO:0007669"/>
    <property type="project" value="UniProtKB-SubCell"/>
</dbReference>
<dbReference type="GO" id="GO:0004350">
    <property type="term" value="F:glutamate-5-semialdehyde dehydrogenase activity"/>
    <property type="evidence" value="ECO:0007669"/>
    <property type="project" value="UniProtKB-UniRule"/>
</dbReference>
<dbReference type="GO" id="GO:0050661">
    <property type="term" value="F:NADP binding"/>
    <property type="evidence" value="ECO:0007669"/>
    <property type="project" value="InterPro"/>
</dbReference>
<dbReference type="GO" id="GO:0055129">
    <property type="term" value="P:L-proline biosynthetic process"/>
    <property type="evidence" value="ECO:0007669"/>
    <property type="project" value="UniProtKB-UniRule"/>
</dbReference>
<dbReference type="CDD" id="cd07079">
    <property type="entry name" value="ALDH_F18-19_ProA-GPR"/>
    <property type="match status" value="1"/>
</dbReference>
<dbReference type="FunFam" id="3.40.309.10:FF:000006">
    <property type="entry name" value="Gamma-glutamyl phosphate reductase"/>
    <property type="match status" value="1"/>
</dbReference>
<dbReference type="Gene3D" id="3.40.605.10">
    <property type="entry name" value="Aldehyde Dehydrogenase, Chain A, domain 1"/>
    <property type="match status" value="1"/>
</dbReference>
<dbReference type="Gene3D" id="3.40.309.10">
    <property type="entry name" value="Aldehyde Dehydrogenase, Chain A, domain 2"/>
    <property type="match status" value="1"/>
</dbReference>
<dbReference type="HAMAP" id="MF_00412">
    <property type="entry name" value="ProA"/>
    <property type="match status" value="1"/>
</dbReference>
<dbReference type="InterPro" id="IPR016161">
    <property type="entry name" value="Ald_DH/histidinol_DH"/>
</dbReference>
<dbReference type="InterPro" id="IPR016163">
    <property type="entry name" value="Ald_DH_C"/>
</dbReference>
<dbReference type="InterPro" id="IPR016162">
    <property type="entry name" value="Ald_DH_N"/>
</dbReference>
<dbReference type="InterPro" id="IPR015590">
    <property type="entry name" value="Aldehyde_DH_dom"/>
</dbReference>
<dbReference type="InterPro" id="IPR020593">
    <property type="entry name" value="G-glutamylP_reductase_CS"/>
</dbReference>
<dbReference type="InterPro" id="IPR012134">
    <property type="entry name" value="Glu-5-SA_DH"/>
</dbReference>
<dbReference type="InterPro" id="IPR000965">
    <property type="entry name" value="GPR_dom"/>
</dbReference>
<dbReference type="NCBIfam" id="NF001221">
    <property type="entry name" value="PRK00197.1"/>
    <property type="match status" value="1"/>
</dbReference>
<dbReference type="NCBIfam" id="TIGR00407">
    <property type="entry name" value="proA"/>
    <property type="match status" value="1"/>
</dbReference>
<dbReference type="PANTHER" id="PTHR11063:SF8">
    <property type="entry name" value="DELTA-1-PYRROLINE-5-CARBOXYLATE SYNTHASE"/>
    <property type="match status" value="1"/>
</dbReference>
<dbReference type="PANTHER" id="PTHR11063">
    <property type="entry name" value="GLUTAMATE SEMIALDEHYDE DEHYDROGENASE"/>
    <property type="match status" value="1"/>
</dbReference>
<dbReference type="Pfam" id="PF00171">
    <property type="entry name" value="Aldedh"/>
    <property type="match status" value="2"/>
</dbReference>
<dbReference type="PIRSF" id="PIRSF000151">
    <property type="entry name" value="GPR"/>
    <property type="match status" value="1"/>
</dbReference>
<dbReference type="SUPFAM" id="SSF53720">
    <property type="entry name" value="ALDH-like"/>
    <property type="match status" value="1"/>
</dbReference>
<dbReference type="PROSITE" id="PS01223">
    <property type="entry name" value="PROA"/>
    <property type="match status" value="1"/>
</dbReference>
<reference key="1">
    <citation type="journal article" date="2002" name="J. Bacteriol.">
        <title>Whole-genome comparison of Mycobacterium tuberculosis clinical and laboratory strains.</title>
        <authorList>
            <person name="Fleischmann R.D."/>
            <person name="Alland D."/>
            <person name="Eisen J.A."/>
            <person name="Carpenter L."/>
            <person name="White O."/>
            <person name="Peterson J.D."/>
            <person name="DeBoy R.T."/>
            <person name="Dodson R.J."/>
            <person name="Gwinn M.L."/>
            <person name="Haft D.H."/>
            <person name="Hickey E.K."/>
            <person name="Kolonay J.F."/>
            <person name="Nelson W.C."/>
            <person name="Umayam L.A."/>
            <person name="Ermolaeva M.D."/>
            <person name="Salzberg S.L."/>
            <person name="Delcher A."/>
            <person name="Utterback T.R."/>
            <person name="Weidman J.F."/>
            <person name="Khouri H.M."/>
            <person name="Gill J."/>
            <person name="Mikula A."/>
            <person name="Bishai W."/>
            <person name="Jacobs W.R. Jr."/>
            <person name="Venter J.C."/>
            <person name="Fraser C.M."/>
        </authorList>
    </citation>
    <scope>NUCLEOTIDE SEQUENCE [LARGE SCALE GENOMIC DNA]</scope>
    <source>
        <strain>CDC 1551 / Oshkosh</strain>
    </source>
</reference>